<comment type="similarity">
    <text evidence="5">Belongs to the formin-like family. Class-II subfamily.</text>
</comment>
<comment type="sequence caution" evidence="5">
    <conflict type="erroneous gene model prediction">
        <sequence resource="EMBL-CDS" id="BAB11453"/>
    </conflict>
    <text>Was originally thought to correspond to two different genes At5g07740 and At5g07750.</text>
</comment>
<comment type="sequence caution" evidence="5">
    <conflict type="erroneous gene model prediction">
        <sequence resource="EMBL-CDS" id="BAB11454"/>
    </conflict>
    <text>Was originally thought to correspond to two different genes At5g07740 and At5g07750.</text>
</comment>
<reference key="1">
    <citation type="journal article" date="1998" name="DNA Res.">
        <title>Structural analysis of Arabidopsis thaliana chromosome 5. IV. Sequence features of the regions of 1,456,315 bp covered by nineteen physically assigned P1 and TAC clones.</title>
        <authorList>
            <person name="Sato S."/>
            <person name="Kaneko T."/>
            <person name="Kotani H."/>
            <person name="Nakamura Y."/>
            <person name="Asamizu E."/>
            <person name="Miyajima N."/>
            <person name="Tabata S."/>
        </authorList>
    </citation>
    <scope>NUCLEOTIDE SEQUENCE [LARGE SCALE GENOMIC DNA]</scope>
    <source>
        <strain>cv. Columbia</strain>
    </source>
</reference>
<reference key="2">
    <citation type="journal article" date="2017" name="Plant J.">
        <title>Araport11: a complete reannotation of the Arabidopsis thaliana reference genome.</title>
        <authorList>
            <person name="Cheng C.Y."/>
            <person name="Krishnakumar V."/>
            <person name="Chan A.P."/>
            <person name="Thibaud-Nissen F."/>
            <person name="Schobel S."/>
            <person name="Town C.D."/>
        </authorList>
    </citation>
    <scope>GENOME REANNOTATION</scope>
    <source>
        <strain>cv. Columbia</strain>
    </source>
</reference>
<reference key="3">
    <citation type="journal article" date="2002" name="Trends Plant Sci.">
        <title>Formins: intermediates in signal-transduction cascades that affect cytoskeletal reorganization.</title>
        <authorList>
            <person name="Deeks M.J."/>
            <person name="Hussey P.J."/>
            <person name="Davies B."/>
        </authorList>
    </citation>
    <scope>GENE FAMILY ORGANIZATION</scope>
    <scope>NOMENCLATURE</scope>
</reference>
<reference key="4">
    <citation type="journal article" date="2004" name="BMC Genomics">
        <title>Formin homology 2 domains occur in multiple contexts in angiosperms.</title>
        <authorList>
            <person name="Cvrckova F."/>
            <person name="Novotny M."/>
            <person name="Pickova D."/>
            <person name="Zarsky V."/>
        </authorList>
    </citation>
    <scope>GENE FAMILY ORGANIZATION</scope>
    <scope>NOMENCLATURE</scope>
</reference>
<protein>
    <recommendedName>
        <fullName>Formin-like protein 20</fullName>
        <shortName>AtFH20</shortName>
    </recommendedName>
</protein>
<keyword id="KW-0378">Hydrolase</keyword>
<keyword id="KW-0904">Protein phosphatase</keyword>
<keyword id="KW-1185">Reference proteome</keyword>
<sequence length="1649" mass="178147">MALFRRFFYKKPPDRLLEISERVYVFDCCFSSDVMGEDEYKVYLGGIVAQLQDHFPEASFMVFNFREGEQRSQISDVLSQYDMTVMDYPRQYESCPLLPLEMIHHFLRSSESWLSLEGQQNVLLMHCERGGWPVLAFMLSGLLLYRKQYHGEQKTLEMVHKQAPKELLHLLSPLNPQPSQLRYLQYISRRNLGSDWPPSDTPLLLDCLILRDLPHFEGKKGCRPILRVYGQDPKARTNRSSILLFSTLKTKKHTRLYQQEECILVKLDIQCRVQGDVVLECIHLHDDLVSEEMVFRIMFHTAFVRANILMLQRDEMDILWDVKDQFPKEFKAEVLFSGADAVVPPITTSTLSDDENDFDMTSPEEFFEVEEIFSDVIDGPDHKRDSDSFVVVDTASDDSEGKEVWKGDVEPNAFLDCASDDSNHKHDMHAETSTDPVKDITVDDVQYRSDGKADSNIDSVKDIGIDDGDEQRKRRTVEAKENDSSTVQTQSKGDEESNDLESMSQKTNTSLNKPISEKPQATLRKQVGANAKPAAAGDSLKPKSKQQETQGPNVRMAKPNAVSRWIPSNKGSYKDSMHVAYPPTRINSAPASITTSLKDGKRATSPDGVIPKDAKTKYLRASVSSPDMRSRAPICSSPDSSPKETPSSLPPASPHQAPPPLPSLTSEAKTVLHSSQAVASPPPPPPPPPLPTYSHYQTSQLPPPPPPPPPFSSERPNSGTVLPPPPPPPPPFSSERPNSGTVLPPPPPPPLPFSSERPNSGTVLPPPPSPPWKSVYASALAIPAICSTSQAPTSSPTPPPPPPAYYSVGQKSSDLQTSQLPSPPPPPPPPPFASVRRNSETLLPPPPPPPPPPFASVRRNSETLLPPPPPPPPWKSLYASTFETHEACSTSSSPPPPPPPPPFSPLNTTKANDYILPPPPLPYTSIAPSPSVKILPLHGISSAPSPPVKTAPPPPPPPPFSNAHSVLSPPPPSYGSPPPPPPPPPSYGSPPPPPPPPPSYGSPPPPPPPPPGYGSPPPPPPPPPSYGSPPPPPPPPFSHVSSIPPPPPPPPMHGGAPPPPPPPPMHGGAPPPPPPPPMHGGAPPPPPPPPMHGGAPPPPPPPMFGGAQPPPPPPMRGGAPPPPPPPMRGGAPPPPPPPMRGGAPPPPPPPMHGGAPPPPPPPMRGGAPPPPPPPGGRGPGAPPPPPPPGGRAPGPPPPPGPRPPGGGPPPPPMLGARGAAVDPRGAGRGRGLPRPGFGSAAQKKSSLKPLHWVKVTRALQGSLWDELQRHGESQTPSEFDVSEIETLFSATVQKPADKSGSRRKSVGAKPEKVQLIDLRRANNTEIMLTKVKMPLPDMMAAVLAMDESVLDVDQIENLIKFCPTKEEMELLKNYTGDKTTLGKCEQYFLELMKVPRVEAKLRVFSFKFQFGTQITEFKKSLNAVNSACEEVRSSQKLKEIMKKILYLGNTLNQGTARGAAVGFKLDSLSKLSDTRAANSKMTLMHYLCKVLASKASVLLDFPKDLESLESASKIQLKSLAEEMQAIIKGLEKLNQELTASESDGPVSDVFRKTLGDFISVAETEVATVSSLYSVVGRNADALAHYFGEDPNRCPFEQVTATLLNFIRLFKKAHEENVKQAELEKKKALKEAEMEKAKGVNLTKKPVDDS</sequence>
<organism>
    <name type="scientific">Arabidopsis thaliana</name>
    <name type="common">Mouse-ear cress</name>
    <dbReference type="NCBI Taxonomy" id="3702"/>
    <lineage>
        <taxon>Eukaryota</taxon>
        <taxon>Viridiplantae</taxon>
        <taxon>Streptophyta</taxon>
        <taxon>Embryophyta</taxon>
        <taxon>Tracheophyta</taxon>
        <taxon>Spermatophyta</taxon>
        <taxon>Magnoliopsida</taxon>
        <taxon>eudicotyledons</taxon>
        <taxon>Gunneridae</taxon>
        <taxon>Pentapetalae</taxon>
        <taxon>rosids</taxon>
        <taxon>malvids</taxon>
        <taxon>Brassicales</taxon>
        <taxon>Brassicaceae</taxon>
        <taxon>Camelineae</taxon>
        <taxon>Arabidopsis</taxon>
    </lineage>
</organism>
<gene>
    <name type="primary">FH20</name>
    <name type="ordered locus">At5g07740/At5g07750</name>
    <name type="ORF">MBK20.20/MBK20.21</name>
</gene>
<accession>Q9FLQ7</accession>
<accession>Q9FLQ8</accession>
<dbReference type="EMBL" id="AB010070">
    <property type="protein sequence ID" value="BAB11453.1"/>
    <property type="status" value="ALT_SEQ"/>
    <property type="molecule type" value="Genomic_DNA"/>
</dbReference>
<dbReference type="EMBL" id="AB010070">
    <property type="protein sequence ID" value="BAB11454.1"/>
    <property type="status" value="ALT_SEQ"/>
    <property type="molecule type" value="Genomic_DNA"/>
</dbReference>
<dbReference type="EMBL" id="CP002688">
    <property type="protein sequence ID" value="AED91199.1"/>
    <property type="molecule type" value="Genomic_DNA"/>
</dbReference>
<dbReference type="RefSeq" id="NP_196391.2">
    <property type="nucleotide sequence ID" value="NM_120856.4"/>
</dbReference>
<dbReference type="SMR" id="Q9FLQ7"/>
<dbReference type="FunCoup" id="Q9FLQ7">
    <property type="interactions" value="343"/>
</dbReference>
<dbReference type="STRING" id="3702.Q9FLQ7"/>
<dbReference type="GlyGen" id="Q9FLQ7">
    <property type="glycosylation" value="1 site"/>
</dbReference>
<dbReference type="iPTMnet" id="Q9FLQ7"/>
<dbReference type="PaxDb" id="3702-AT5G07740.1"/>
<dbReference type="EnsemblPlants" id="AT5G07740.1">
    <property type="protein sequence ID" value="AT5G07740.1"/>
    <property type="gene ID" value="AT5G07740"/>
</dbReference>
<dbReference type="Gramene" id="AT5G07740.1">
    <property type="protein sequence ID" value="AT5G07740.1"/>
    <property type="gene ID" value="AT5G07740"/>
</dbReference>
<dbReference type="KEGG" id="ath:AT5G07740"/>
<dbReference type="Araport" id="AT5G07740"/>
<dbReference type="TAIR" id="AT5G07740"/>
<dbReference type="eggNOG" id="KOG1922">
    <property type="taxonomic scope" value="Eukaryota"/>
</dbReference>
<dbReference type="HOGENOM" id="CLU_002558_0_1_1"/>
<dbReference type="InParanoid" id="Q9FLQ7"/>
<dbReference type="OMA" id="HYITRRT"/>
<dbReference type="PRO" id="PR:Q9FLQ7"/>
<dbReference type="Proteomes" id="UP000006548">
    <property type="component" value="Chromosome 5"/>
</dbReference>
<dbReference type="ExpressionAtlas" id="Q9FLQ7">
    <property type="expression patterns" value="baseline and differential"/>
</dbReference>
<dbReference type="GO" id="GO:0004721">
    <property type="term" value="F:phosphoprotein phosphatase activity"/>
    <property type="evidence" value="ECO:0007669"/>
    <property type="project" value="UniProtKB-KW"/>
</dbReference>
<dbReference type="FunFam" id="1.20.58.2220:FF:000020">
    <property type="entry name" value="Formin-like protein"/>
    <property type="match status" value="1"/>
</dbReference>
<dbReference type="Gene3D" id="2.60.40.1110">
    <property type="match status" value="1"/>
</dbReference>
<dbReference type="Gene3D" id="1.20.58.2220">
    <property type="entry name" value="Formin, FH2 domain"/>
    <property type="match status" value="1"/>
</dbReference>
<dbReference type="Gene3D" id="3.90.190.10">
    <property type="entry name" value="Protein tyrosine phosphatase superfamily"/>
    <property type="match status" value="1"/>
</dbReference>
<dbReference type="InterPro" id="IPR035892">
    <property type="entry name" value="C2_domain_sf"/>
</dbReference>
<dbReference type="InterPro" id="IPR015425">
    <property type="entry name" value="FH2_Formin"/>
</dbReference>
<dbReference type="InterPro" id="IPR042201">
    <property type="entry name" value="FH2_Formin_sf"/>
</dbReference>
<dbReference type="InterPro" id="IPR051144">
    <property type="entry name" value="Formin_homology_domain"/>
</dbReference>
<dbReference type="InterPro" id="IPR029021">
    <property type="entry name" value="Prot-tyrosine_phosphatase-like"/>
</dbReference>
<dbReference type="InterPro" id="IPR014020">
    <property type="entry name" value="Tensin_C2-dom"/>
</dbReference>
<dbReference type="PANTHER" id="PTHR45733">
    <property type="entry name" value="FORMIN-J"/>
    <property type="match status" value="1"/>
</dbReference>
<dbReference type="PANTHER" id="PTHR45733:SF10">
    <property type="entry name" value="FORMIN-LIKE PROTEIN 15A-RELATED"/>
    <property type="match status" value="1"/>
</dbReference>
<dbReference type="Pfam" id="PF02181">
    <property type="entry name" value="FH2"/>
    <property type="match status" value="1"/>
</dbReference>
<dbReference type="Pfam" id="PF10409">
    <property type="entry name" value="PTEN_C2"/>
    <property type="match status" value="1"/>
</dbReference>
<dbReference type="SMART" id="SM00498">
    <property type="entry name" value="FH2"/>
    <property type="match status" value="1"/>
</dbReference>
<dbReference type="SMART" id="SM01326">
    <property type="entry name" value="PTEN_C2"/>
    <property type="match status" value="1"/>
</dbReference>
<dbReference type="SUPFAM" id="SSF52799">
    <property type="entry name" value="(Phosphotyrosine protein) phosphatases II"/>
    <property type="match status" value="1"/>
</dbReference>
<dbReference type="SUPFAM" id="SSF49562">
    <property type="entry name" value="C2 domain (Calcium/lipid-binding domain, CaLB)"/>
    <property type="match status" value="1"/>
</dbReference>
<dbReference type="SUPFAM" id="SSF101447">
    <property type="entry name" value="Formin homology 2 domain (FH2 domain)"/>
    <property type="match status" value="1"/>
</dbReference>
<dbReference type="PROSITE" id="PS51182">
    <property type="entry name" value="C2_TENSIN"/>
    <property type="match status" value="1"/>
</dbReference>
<dbReference type="PROSITE" id="PS51444">
    <property type="entry name" value="FH2"/>
    <property type="match status" value="1"/>
</dbReference>
<dbReference type="PROSITE" id="PS51181">
    <property type="entry name" value="PPASE_TENSIN"/>
    <property type="match status" value="1"/>
</dbReference>
<name>FH20_ARATH</name>
<proteinExistence type="evidence at transcript level"/>
<evidence type="ECO:0000255" key="1">
    <source>
        <dbReference type="PROSITE-ProRule" id="PRU00589"/>
    </source>
</evidence>
<evidence type="ECO:0000255" key="2">
    <source>
        <dbReference type="PROSITE-ProRule" id="PRU00590"/>
    </source>
</evidence>
<evidence type="ECO:0000255" key="3">
    <source>
        <dbReference type="PROSITE-ProRule" id="PRU00774"/>
    </source>
</evidence>
<evidence type="ECO:0000256" key="4">
    <source>
        <dbReference type="SAM" id="MobiDB-lite"/>
    </source>
</evidence>
<evidence type="ECO:0000305" key="5"/>
<feature type="chain" id="PRO_0000308546" description="Formin-like protein 20">
    <location>
        <begin position="1"/>
        <end position="1649"/>
    </location>
</feature>
<feature type="domain" description="Phosphatase tensin-type" evidence="2">
    <location>
        <begin position="1"/>
        <end position="194"/>
    </location>
</feature>
<feature type="domain" description="C2 tensin-type" evidence="1">
    <location>
        <begin position="200"/>
        <end position="339"/>
    </location>
</feature>
<feature type="domain" description="FH2" evidence="3">
    <location>
        <begin position="1237"/>
        <end position="1635"/>
    </location>
</feature>
<feature type="region of interest" description="Disordered" evidence="4">
    <location>
        <begin position="416"/>
        <end position="774"/>
    </location>
</feature>
<feature type="region of interest" description="Disordered" evidence="4">
    <location>
        <begin position="787"/>
        <end position="1245"/>
    </location>
</feature>
<feature type="compositionally biased region" description="Basic and acidic residues" evidence="4">
    <location>
        <begin position="421"/>
        <end position="483"/>
    </location>
</feature>
<feature type="compositionally biased region" description="Polar residues" evidence="4">
    <location>
        <begin position="500"/>
        <end position="513"/>
    </location>
</feature>
<feature type="compositionally biased region" description="Polar residues" evidence="4">
    <location>
        <begin position="585"/>
        <end position="597"/>
    </location>
</feature>
<feature type="compositionally biased region" description="Basic and acidic residues" evidence="4">
    <location>
        <begin position="598"/>
        <end position="616"/>
    </location>
</feature>
<feature type="compositionally biased region" description="Pro residues" evidence="4">
    <location>
        <begin position="648"/>
        <end position="662"/>
    </location>
</feature>
<feature type="compositionally biased region" description="Polar residues" evidence="4">
    <location>
        <begin position="665"/>
        <end position="678"/>
    </location>
</feature>
<feature type="compositionally biased region" description="Pro residues" evidence="4">
    <location>
        <begin position="680"/>
        <end position="691"/>
    </location>
</feature>
<feature type="compositionally biased region" description="Pro residues" evidence="4">
    <location>
        <begin position="701"/>
        <end position="711"/>
    </location>
</feature>
<feature type="compositionally biased region" description="Pro residues" evidence="4">
    <location>
        <begin position="722"/>
        <end position="732"/>
    </location>
</feature>
<feature type="compositionally biased region" description="Pro residues" evidence="4">
    <location>
        <begin position="743"/>
        <end position="752"/>
    </location>
</feature>
<feature type="compositionally biased region" description="Pro residues" evidence="4">
    <location>
        <begin position="795"/>
        <end position="804"/>
    </location>
</feature>
<feature type="compositionally biased region" description="Polar residues" evidence="4">
    <location>
        <begin position="809"/>
        <end position="820"/>
    </location>
</feature>
<feature type="compositionally biased region" description="Pro residues" evidence="4">
    <location>
        <begin position="821"/>
        <end position="832"/>
    </location>
</feature>
<feature type="compositionally biased region" description="Pro residues" evidence="4">
    <location>
        <begin position="843"/>
        <end position="854"/>
    </location>
</feature>
<feature type="compositionally biased region" description="Pro residues" evidence="4">
    <location>
        <begin position="865"/>
        <end position="874"/>
    </location>
</feature>
<feature type="compositionally biased region" description="Polar residues" evidence="4">
    <location>
        <begin position="878"/>
        <end position="890"/>
    </location>
</feature>
<feature type="compositionally biased region" description="Pro residues" evidence="4">
    <location>
        <begin position="893"/>
        <end position="904"/>
    </location>
</feature>
<feature type="compositionally biased region" description="Pro residues" evidence="4">
    <location>
        <begin position="944"/>
        <end position="960"/>
    </location>
</feature>
<feature type="compositionally biased region" description="Pro residues" evidence="4">
    <location>
        <begin position="968"/>
        <end position="1213"/>
    </location>
</feature>
<feature type="active site" description="Phosphocysteine intermediate" evidence="2">
    <location>
        <position position="127"/>
    </location>
</feature>